<gene>
    <name evidence="1" type="primary">ilvD</name>
    <name type="ordered locus">BTH_I0827</name>
</gene>
<organism>
    <name type="scientific">Burkholderia thailandensis (strain ATCC 700388 / DSM 13276 / CCUG 48851 / CIP 106301 / E264)</name>
    <dbReference type="NCBI Taxonomy" id="271848"/>
    <lineage>
        <taxon>Bacteria</taxon>
        <taxon>Pseudomonadati</taxon>
        <taxon>Pseudomonadota</taxon>
        <taxon>Betaproteobacteria</taxon>
        <taxon>Burkholderiales</taxon>
        <taxon>Burkholderiaceae</taxon>
        <taxon>Burkholderia</taxon>
        <taxon>pseudomallei group</taxon>
    </lineage>
</organism>
<feature type="chain" id="PRO_1000000966" description="Dihydroxy-acid dehydratase">
    <location>
        <begin position="1"/>
        <end position="557"/>
    </location>
</feature>
<feature type="active site" description="Proton acceptor" evidence="1">
    <location>
        <position position="473"/>
    </location>
</feature>
<feature type="binding site" evidence="1">
    <location>
        <position position="50"/>
    </location>
    <ligand>
        <name>[2Fe-2S] cluster</name>
        <dbReference type="ChEBI" id="CHEBI:190135"/>
    </ligand>
</feature>
<feature type="binding site" evidence="1">
    <location>
        <position position="82"/>
    </location>
    <ligand>
        <name>Mg(2+)</name>
        <dbReference type="ChEBI" id="CHEBI:18420"/>
    </ligand>
</feature>
<feature type="binding site" evidence="1">
    <location>
        <position position="123"/>
    </location>
    <ligand>
        <name>[2Fe-2S] cluster</name>
        <dbReference type="ChEBI" id="CHEBI:190135"/>
    </ligand>
</feature>
<feature type="binding site" evidence="1">
    <location>
        <position position="124"/>
    </location>
    <ligand>
        <name>Mg(2+)</name>
        <dbReference type="ChEBI" id="CHEBI:18420"/>
    </ligand>
</feature>
<feature type="binding site" description="via carbamate group" evidence="1">
    <location>
        <position position="125"/>
    </location>
    <ligand>
        <name>Mg(2+)</name>
        <dbReference type="ChEBI" id="CHEBI:18420"/>
    </ligand>
</feature>
<feature type="binding site" evidence="1">
    <location>
        <position position="195"/>
    </location>
    <ligand>
        <name>[2Fe-2S] cluster</name>
        <dbReference type="ChEBI" id="CHEBI:190135"/>
    </ligand>
</feature>
<feature type="binding site" evidence="1">
    <location>
        <position position="447"/>
    </location>
    <ligand>
        <name>Mg(2+)</name>
        <dbReference type="ChEBI" id="CHEBI:18420"/>
    </ligand>
</feature>
<feature type="modified residue" description="N6-carboxylysine" evidence="1">
    <location>
        <position position="125"/>
    </location>
</feature>
<accession>Q2T0B6</accession>
<proteinExistence type="inferred from homology"/>
<reference key="1">
    <citation type="journal article" date="2005" name="BMC Genomics">
        <title>Bacterial genome adaptation to niches: divergence of the potential virulence genes in three Burkholderia species of different survival strategies.</title>
        <authorList>
            <person name="Kim H.S."/>
            <person name="Schell M.A."/>
            <person name="Yu Y."/>
            <person name="Ulrich R.L."/>
            <person name="Sarria S.H."/>
            <person name="Nierman W.C."/>
            <person name="DeShazer D."/>
        </authorList>
    </citation>
    <scope>NUCLEOTIDE SEQUENCE [LARGE SCALE GENOMIC DNA]</scope>
    <source>
        <strain>ATCC 700388 / DSM 13276 / CCUG 48851 / CIP 106301 / E264</strain>
    </source>
</reference>
<dbReference type="EC" id="4.2.1.9" evidence="1"/>
<dbReference type="EMBL" id="CP000086">
    <property type="protein sequence ID" value="ABC37401.1"/>
    <property type="molecule type" value="Genomic_DNA"/>
</dbReference>
<dbReference type="RefSeq" id="WP_009903380.1">
    <property type="nucleotide sequence ID" value="NZ_CP008785.1"/>
</dbReference>
<dbReference type="SMR" id="Q2T0B6"/>
<dbReference type="GeneID" id="45120583"/>
<dbReference type="KEGG" id="bte:BTH_I0827"/>
<dbReference type="HOGENOM" id="CLU_014271_4_1_4"/>
<dbReference type="UniPathway" id="UPA00047">
    <property type="reaction ID" value="UER00057"/>
</dbReference>
<dbReference type="UniPathway" id="UPA00049">
    <property type="reaction ID" value="UER00061"/>
</dbReference>
<dbReference type="Proteomes" id="UP000001930">
    <property type="component" value="Chromosome I"/>
</dbReference>
<dbReference type="GO" id="GO:0051537">
    <property type="term" value="F:2 iron, 2 sulfur cluster binding"/>
    <property type="evidence" value="ECO:0007669"/>
    <property type="project" value="UniProtKB-UniRule"/>
</dbReference>
<dbReference type="GO" id="GO:0004160">
    <property type="term" value="F:dihydroxy-acid dehydratase activity"/>
    <property type="evidence" value="ECO:0007669"/>
    <property type="project" value="UniProtKB-UniRule"/>
</dbReference>
<dbReference type="GO" id="GO:0000287">
    <property type="term" value="F:magnesium ion binding"/>
    <property type="evidence" value="ECO:0007669"/>
    <property type="project" value="UniProtKB-UniRule"/>
</dbReference>
<dbReference type="GO" id="GO:0009097">
    <property type="term" value="P:isoleucine biosynthetic process"/>
    <property type="evidence" value="ECO:0007669"/>
    <property type="project" value="UniProtKB-UniRule"/>
</dbReference>
<dbReference type="GO" id="GO:0009099">
    <property type="term" value="P:L-valine biosynthetic process"/>
    <property type="evidence" value="ECO:0007669"/>
    <property type="project" value="UniProtKB-UniRule"/>
</dbReference>
<dbReference type="FunFam" id="3.50.30.80:FF:000001">
    <property type="entry name" value="Dihydroxy-acid dehydratase"/>
    <property type="match status" value="1"/>
</dbReference>
<dbReference type="Gene3D" id="3.50.30.80">
    <property type="entry name" value="IlvD/EDD C-terminal domain-like"/>
    <property type="match status" value="1"/>
</dbReference>
<dbReference type="HAMAP" id="MF_00012">
    <property type="entry name" value="IlvD"/>
    <property type="match status" value="1"/>
</dbReference>
<dbReference type="InterPro" id="IPR050165">
    <property type="entry name" value="DHAD_IlvD/Edd"/>
</dbReference>
<dbReference type="InterPro" id="IPR042096">
    <property type="entry name" value="Dihydro-acid_dehy_C"/>
</dbReference>
<dbReference type="InterPro" id="IPR004404">
    <property type="entry name" value="DihydroxyA_deHydtase"/>
</dbReference>
<dbReference type="InterPro" id="IPR020558">
    <property type="entry name" value="DiOHA_6PGluconate_deHydtase_CS"/>
</dbReference>
<dbReference type="InterPro" id="IPR056740">
    <property type="entry name" value="ILV_EDD_C"/>
</dbReference>
<dbReference type="InterPro" id="IPR000581">
    <property type="entry name" value="ILV_EDD_N"/>
</dbReference>
<dbReference type="InterPro" id="IPR037237">
    <property type="entry name" value="IlvD/EDD_N"/>
</dbReference>
<dbReference type="NCBIfam" id="TIGR00110">
    <property type="entry name" value="ilvD"/>
    <property type="match status" value="1"/>
</dbReference>
<dbReference type="NCBIfam" id="NF002068">
    <property type="entry name" value="PRK00911.1"/>
    <property type="match status" value="1"/>
</dbReference>
<dbReference type="PANTHER" id="PTHR21000">
    <property type="entry name" value="DIHYDROXY-ACID DEHYDRATASE DAD"/>
    <property type="match status" value="1"/>
</dbReference>
<dbReference type="PANTHER" id="PTHR21000:SF5">
    <property type="entry name" value="DIHYDROXY-ACID DEHYDRATASE, MITOCHONDRIAL"/>
    <property type="match status" value="1"/>
</dbReference>
<dbReference type="Pfam" id="PF24877">
    <property type="entry name" value="ILV_EDD_C"/>
    <property type="match status" value="1"/>
</dbReference>
<dbReference type="Pfam" id="PF00920">
    <property type="entry name" value="ILVD_EDD_N"/>
    <property type="match status" value="1"/>
</dbReference>
<dbReference type="SUPFAM" id="SSF143975">
    <property type="entry name" value="IlvD/EDD N-terminal domain-like"/>
    <property type="match status" value="1"/>
</dbReference>
<dbReference type="SUPFAM" id="SSF52016">
    <property type="entry name" value="LeuD/IlvD-like"/>
    <property type="match status" value="1"/>
</dbReference>
<dbReference type="PROSITE" id="PS00886">
    <property type="entry name" value="ILVD_EDD_1"/>
    <property type="match status" value="1"/>
</dbReference>
<dbReference type="PROSITE" id="PS00887">
    <property type="entry name" value="ILVD_EDD_2"/>
    <property type="match status" value="1"/>
</dbReference>
<protein>
    <recommendedName>
        <fullName evidence="1">Dihydroxy-acid dehydratase</fullName>
        <shortName evidence="1">DAD</shortName>
        <ecNumber evidence="1">4.2.1.9</ecNumber>
    </recommendedName>
</protein>
<keyword id="KW-0001">2Fe-2S</keyword>
<keyword id="KW-0028">Amino-acid biosynthesis</keyword>
<keyword id="KW-0100">Branched-chain amino acid biosynthesis</keyword>
<keyword id="KW-0408">Iron</keyword>
<keyword id="KW-0411">Iron-sulfur</keyword>
<keyword id="KW-0456">Lyase</keyword>
<keyword id="KW-0460">Magnesium</keyword>
<keyword id="KW-0479">Metal-binding</keyword>
<sequence>MSYNRRSKNITQGVARSPNRSMYYALGYQKDDFDKPMIGVANGHSTITPCNAGLQRLVDAAVSAVKQADANPQTFGTPTISDGMSMGTEGMKYSLVSREVIADCIETCVQGQWMDGVVVVGGCDKNMPGGMIALARINVPGIYVYGGTIRPGHWKGKDLTIVSAFEAVGEFTAGRMSQEDFEGVEKNACPTTGSCGGMYTANTMSSSFEALGMSLLYSSTMANPDQEKVDSAAESARVLVEAVKKDLKPRDIITKQAIENAVSVIMATGGSTNAVLHYLAIAHAAEIDWSIEDFERIRKRVPVICDLKPSGQYVATDLHAAGGIPQVMKLLLDAGLLHGDCMTITGRTIAEELKDVPSVPRADQKVIYPIDQALYKEGHLAILKGNLAEDGAVAKITGLKNPVITGPARVFDDEQSALAAILDDKIRAGDVVVLRYLGPQGGPGMPEMLAPTSAIIGKGLGESVGLITDGRFSGGTWGMVVGHVAPEAFVGGTIALVQEGDSITIDAHKLLLQLNVDDAELARRRAAWKQPAPRYTRGVLAKYAALARPANKGAVTG</sequence>
<name>ILVD_BURTA</name>
<comment type="function">
    <text evidence="1">Functions in the biosynthesis of branched-chain amino acids. Catalyzes the dehydration of (2R,3R)-2,3-dihydroxy-3-methylpentanoate (2,3-dihydroxy-3-methylvalerate) into 2-oxo-3-methylpentanoate (2-oxo-3-methylvalerate) and of (2R)-2,3-dihydroxy-3-methylbutanoate (2,3-dihydroxyisovalerate) into 2-oxo-3-methylbutanoate (2-oxoisovalerate), the penultimate precursor to L-isoleucine and L-valine, respectively.</text>
</comment>
<comment type="catalytic activity">
    <reaction evidence="1">
        <text>(2R)-2,3-dihydroxy-3-methylbutanoate = 3-methyl-2-oxobutanoate + H2O</text>
        <dbReference type="Rhea" id="RHEA:24809"/>
        <dbReference type="ChEBI" id="CHEBI:11851"/>
        <dbReference type="ChEBI" id="CHEBI:15377"/>
        <dbReference type="ChEBI" id="CHEBI:49072"/>
        <dbReference type="EC" id="4.2.1.9"/>
    </reaction>
    <physiologicalReaction direction="left-to-right" evidence="1">
        <dbReference type="Rhea" id="RHEA:24810"/>
    </physiologicalReaction>
</comment>
<comment type="catalytic activity">
    <reaction evidence="1">
        <text>(2R,3R)-2,3-dihydroxy-3-methylpentanoate = (S)-3-methyl-2-oxopentanoate + H2O</text>
        <dbReference type="Rhea" id="RHEA:27694"/>
        <dbReference type="ChEBI" id="CHEBI:15377"/>
        <dbReference type="ChEBI" id="CHEBI:35146"/>
        <dbReference type="ChEBI" id="CHEBI:49258"/>
        <dbReference type="EC" id="4.2.1.9"/>
    </reaction>
    <physiologicalReaction direction="left-to-right" evidence="1">
        <dbReference type="Rhea" id="RHEA:27695"/>
    </physiologicalReaction>
</comment>
<comment type="cofactor">
    <cofactor evidence="1">
        <name>[2Fe-2S] cluster</name>
        <dbReference type="ChEBI" id="CHEBI:190135"/>
    </cofactor>
    <text evidence="1">Binds 1 [2Fe-2S] cluster per subunit. This cluster acts as a Lewis acid cofactor.</text>
</comment>
<comment type="cofactor">
    <cofactor evidence="1">
        <name>Mg(2+)</name>
        <dbReference type="ChEBI" id="CHEBI:18420"/>
    </cofactor>
</comment>
<comment type="pathway">
    <text evidence="1">Amino-acid biosynthesis; L-isoleucine biosynthesis; L-isoleucine from 2-oxobutanoate: step 3/4.</text>
</comment>
<comment type="pathway">
    <text evidence="1">Amino-acid biosynthesis; L-valine biosynthesis; L-valine from pyruvate: step 3/4.</text>
</comment>
<comment type="subunit">
    <text evidence="1">Homodimer.</text>
</comment>
<comment type="similarity">
    <text evidence="1">Belongs to the IlvD/Edd family.</text>
</comment>
<evidence type="ECO:0000255" key="1">
    <source>
        <dbReference type="HAMAP-Rule" id="MF_00012"/>
    </source>
</evidence>